<reference evidence="4" key="1">
    <citation type="submission" date="2007-06" db="EMBL/GenBank/DDBJ databases">
        <authorList>
            <consortium name="NIH - Mammalian Gene Collection (MGC) project"/>
        </authorList>
    </citation>
    <scope>NUCLEOTIDE SEQUENCE [LARGE SCALE MRNA]</scope>
    <source>
        <strain evidence="4">Crossbred X Angus</strain>
        <tissue evidence="4">Liver</tissue>
    </source>
</reference>
<dbReference type="EMBL" id="BC146113">
    <property type="protein sequence ID" value="AAI46114.1"/>
    <property type="molecule type" value="mRNA"/>
</dbReference>
<dbReference type="RefSeq" id="NP_001094651.1">
    <property type="nucleotide sequence ID" value="NM_001101181.1"/>
</dbReference>
<dbReference type="SMR" id="A6H750"/>
<dbReference type="FunCoup" id="A6H750">
    <property type="interactions" value="648"/>
</dbReference>
<dbReference type="STRING" id="9913.ENSBTAP00000023059"/>
<dbReference type="PaxDb" id="9913-ENSBTAP00000023059"/>
<dbReference type="GeneID" id="538921"/>
<dbReference type="KEGG" id="bta:538921"/>
<dbReference type="CTD" id="84643"/>
<dbReference type="eggNOG" id="KOG0246">
    <property type="taxonomic scope" value="Eukaryota"/>
</dbReference>
<dbReference type="InParanoid" id="A6H750"/>
<dbReference type="OrthoDB" id="3176171at2759"/>
<dbReference type="Proteomes" id="UP000009136">
    <property type="component" value="Unplaced"/>
</dbReference>
<dbReference type="GO" id="GO:0005813">
    <property type="term" value="C:centrosome"/>
    <property type="evidence" value="ECO:0000318"/>
    <property type="project" value="GO_Central"/>
</dbReference>
<dbReference type="GO" id="GO:0005737">
    <property type="term" value="C:cytoplasm"/>
    <property type="evidence" value="ECO:0000318"/>
    <property type="project" value="GO_Central"/>
</dbReference>
<dbReference type="GO" id="GO:0005871">
    <property type="term" value="C:kinesin complex"/>
    <property type="evidence" value="ECO:0000318"/>
    <property type="project" value="GO_Central"/>
</dbReference>
<dbReference type="GO" id="GO:0000776">
    <property type="term" value="C:kinetochore"/>
    <property type="evidence" value="ECO:0007669"/>
    <property type="project" value="UniProtKB-KW"/>
</dbReference>
<dbReference type="GO" id="GO:0005874">
    <property type="term" value="C:microtubule"/>
    <property type="evidence" value="ECO:0000318"/>
    <property type="project" value="GO_Central"/>
</dbReference>
<dbReference type="GO" id="GO:0005819">
    <property type="term" value="C:spindle"/>
    <property type="evidence" value="ECO:0000318"/>
    <property type="project" value="GO_Central"/>
</dbReference>
<dbReference type="GO" id="GO:0005524">
    <property type="term" value="F:ATP binding"/>
    <property type="evidence" value="ECO:0007669"/>
    <property type="project" value="UniProtKB-KW"/>
</dbReference>
<dbReference type="GO" id="GO:0016887">
    <property type="term" value="F:ATP hydrolysis activity"/>
    <property type="evidence" value="ECO:0000318"/>
    <property type="project" value="GO_Central"/>
</dbReference>
<dbReference type="GO" id="GO:0008017">
    <property type="term" value="F:microtubule binding"/>
    <property type="evidence" value="ECO:0000318"/>
    <property type="project" value="GO_Central"/>
</dbReference>
<dbReference type="GO" id="GO:0003777">
    <property type="term" value="F:microtubule motor activity"/>
    <property type="evidence" value="ECO:0000318"/>
    <property type="project" value="GO_Central"/>
</dbReference>
<dbReference type="GO" id="GO:0051301">
    <property type="term" value="P:cell division"/>
    <property type="evidence" value="ECO:0007669"/>
    <property type="project" value="UniProtKB-KW"/>
</dbReference>
<dbReference type="GO" id="GO:0051310">
    <property type="term" value="P:metaphase chromosome alignment"/>
    <property type="evidence" value="ECO:0000250"/>
    <property type="project" value="UniProtKB"/>
</dbReference>
<dbReference type="GO" id="GO:0007019">
    <property type="term" value="P:microtubule depolymerization"/>
    <property type="evidence" value="ECO:0000250"/>
    <property type="project" value="UniProtKB"/>
</dbReference>
<dbReference type="GO" id="GO:0007018">
    <property type="term" value="P:microtubule-based movement"/>
    <property type="evidence" value="ECO:0000318"/>
    <property type="project" value="GO_Central"/>
</dbReference>
<dbReference type="GO" id="GO:0051983">
    <property type="term" value="P:regulation of chromosome segregation"/>
    <property type="evidence" value="ECO:0000250"/>
    <property type="project" value="UniProtKB"/>
</dbReference>
<dbReference type="CDD" id="cd01367">
    <property type="entry name" value="KISc_KIF2_like"/>
    <property type="match status" value="1"/>
</dbReference>
<dbReference type="FunFam" id="3.40.850.10:FF:000012">
    <property type="entry name" value="Kinesin-like protein"/>
    <property type="match status" value="1"/>
</dbReference>
<dbReference type="Gene3D" id="3.40.850.10">
    <property type="entry name" value="Kinesin motor domain"/>
    <property type="match status" value="1"/>
</dbReference>
<dbReference type="InterPro" id="IPR054473">
    <property type="entry name" value="KIF2A-like_N"/>
</dbReference>
<dbReference type="InterPro" id="IPR027640">
    <property type="entry name" value="Kinesin-like_fam"/>
</dbReference>
<dbReference type="InterPro" id="IPR019821">
    <property type="entry name" value="Kinesin_motor_CS"/>
</dbReference>
<dbReference type="InterPro" id="IPR001752">
    <property type="entry name" value="Kinesin_motor_dom"/>
</dbReference>
<dbReference type="InterPro" id="IPR036961">
    <property type="entry name" value="Kinesin_motor_dom_sf"/>
</dbReference>
<dbReference type="InterPro" id="IPR027417">
    <property type="entry name" value="P-loop_NTPase"/>
</dbReference>
<dbReference type="PANTHER" id="PTHR47971:SF24">
    <property type="entry name" value="KINESIN-LIKE PROTEIN"/>
    <property type="match status" value="1"/>
</dbReference>
<dbReference type="PANTHER" id="PTHR47971">
    <property type="entry name" value="KINESIN-RELATED PROTEIN 6"/>
    <property type="match status" value="1"/>
</dbReference>
<dbReference type="Pfam" id="PF22923">
    <property type="entry name" value="KIF2A-like_1st"/>
    <property type="match status" value="1"/>
</dbReference>
<dbReference type="Pfam" id="PF00225">
    <property type="entry name" value="Kinesin"/>
    <property type="match status" value="1"/>
</dbReference>
<dbReference type="PRINTS" id="PR00380">
    <property type="entry name" value="KINESINHEAVY"/>
</dbReference>
<dbReference type="SMART" id="SM00129">
    <property type="entry name" value="KISc"/>
    <property type="match status" value="1"/>
</dbReference>
<dbReference type="SUPFAM" id="SSF52540">
    <property type="entry name" value="P-loop containing nucleoside triphosphate hydrolases"/>
    <property type="match status" value="1"/>
</dbReference>
<dbReference type="PROSITE" id="PS00411">
    <property type="entry name" value="KINESIN_MOTOR_1"/>
    <property type="match status" value="1"/>
</dbReference>
<dbReference type="PROSITE" id="PS50067">
    <property type="entry name" value="KINESIN_MOTOR_2"/>
    <property type="match status" value="1"/>
</dbReference>
<evidence type="ECO:0000250" key="1">
    <source>
        <dbReference type="UniProtKB" id="Q8N4N8"/>
    </source>
</evidence>
<evidence type="ECO:0000255" key="2"/>
<evidence type="ECO:0000255" key="3">
    <source>
        <dbReference type="PROSITE-ProRule" id="PRU00283"/>
    </source>
</evidence>
<evidence type="ECO:0000312" key="4">
    <source>
        <dbReference type="EMBL" id="AAI46114.1"/>
    </source>
</evidence>
<name>KIF2B_BOVIN</name>
<sequence>MASQLFRPLTPRLSSLTPVKPHFGHLQAGISVAIQRTDGRIHLAVVTEVRRDNAWVTVEWAEKGVKKGKKVALETIFLLNPALALAGPAAQGRASRSVSLAPPSVIGDQRTAARWAGKIPQRNETPSGDSLAVRVPSSPCLMTQRKSACLREIEKLQKQRERRRRLHREIRAQRARDADTGNAHYEIRRLIEECRRRLRGGRISGPEPRDGRRICVCVRKRPLNRQEATREDLDIVTIPSDNVVMVHESKQKVDLTRYLENQTFCFDHAFDDTASNELVYQFTDQPLVESIFRHGMATCFAYGQTGSGKTHTMGGGFSGRDQDCSKGIYAMVAQDVFLLLKTSAYEKLNLKVYGTFFEIYGGKVYDLLNWKKKLQVLEDGSQQIQVVGLQEQEVCCVEDMLNLVELGNSCRTSGQTSVNAHSSRSHAVFQIILKSRGKLHGKFSLVDLAGNERGADTAKANRKRQLEGAEINKSLLALKECIRALGQNKSHTPFRASKLTQVLRDSFIGQNSSTCMIATISPGMASCENTLNTLRYANRVKEITLNLRPRHRCLYPAEREMPRVLENHIRNSEMSLQGDEFIRIPCLQSEEEKETEGIKVLSSPLVDTTISWKEASQWPDNKIQDTSDEVNCNVDFCIAQLLSILEKKIDILTEIRRKLKLLQADIQKENRHGEVNGERSDLK</sequence>
<feature type="chain" id="PRO_0000306275" description="Kinesin-like protein KIF2B">
    <location>
        <begin position="1"/>
        <end position="683"/>
    </location>
</feature>
<feature type="domain" description="Kinesin motor" evidence="3">
    <location>
        <begin position="213"/>
        <end position="543"/>
    </location>
</feature>
<feature type="coiled-coil region" evidence="2">
    <location>
        <begin position="141"/>
        <end position="176"/>
    </location>
</feature>
<feature type="coiled-coil region" evidence="2">
    <location>
        <begin position="640"/>
        <end position="672"/>
    </location>
</feature>
<feature type="binding site" evidence="3">
    <location>
        <begin position="303"/>
        <end position="310"/>
    </location>
    <ligand>
        <name>ATP</name>
        <dbReference type="ChEBI" id="CHEBI:30616"/>
    </ligand>
</feature>
<feature type="modified residue" description="Phosphothreonine; by PLK1" evidence="1">
    <location>
        <position position="125"/>
    </location>
</feature>
<feature type="modified residue" description="Phosphoserine; by PLK1" evidence="1">
    <location>
        <position position="204"/>
    </location>
</feature>
<accession>A6H750</accession>
<protein>
    <recommendedName>
        <fullName>Kinesin-like protein KIF2B</fullName>
    </recommendedName>
</protein>
<proteinExistence type="evidence at transcript level"/>
<gene>
    <name evidence="1" type="primary">KIF2B</name>
</gene>
<organism>
    <name type="scientific">Bos taurus</name>
    <name type="common">Bovine</name>
    <dbReference type="NCBI Taxonomy" id="9913"/>
    <lineage>
        <taxon>Eukaryota</taxon>
        <taxon>Metazoa</taxon>
        <taxon>Chordata</taxon>
        <taxon>Craniata</taxon>
        <taxon>Vertebrata</taxon>
        <taxon>Euteleostomi</taxon>
        <taxon>Mammalia</taxon>
        <taxon>Eutheria</taxon>
        <taxon>Laurasiatheria</taxon>
        <taxon>Artiodactyla</taxon>
        <taxon>Ruminantia</taxon>
        <taxon>Pecora</taxon>
        <taxon>Bovidae</taxon>
        <taxon>Bovinae</taxon>
        <taxon>Bos</taxon>
    </lineage>
</organism>
<keyword id="KW-0067">ATP-binding</keyword>
<keyword id="KW-0131">Cell cycle</keyword>
<keyword id="KW-0132">Cell division</keyword>
<keyword id="KW-0137">Centromere</keyword>
<keyword id="KW-0158">Chromosome</keyword>
<keyword id="KW-0175">Coiled coil</keyword>
<keyword id="KW-0963">Cytoplasm</keyword>
<keyword id="KW-0206">Cytoskeleton</keyword>
<keyword id="KW-0995">Kinetochore</keyword>
<keyword id="KW-0493">Microtubule</keyword>
<keyword id="KW-0498">Mitosis</keyword>
<keyword id="KW-0505">Motor protein</keyword>
<keyword id="KW-0547">Nucleotide-binding</keyword>
<keyword id="KW-0597">Phosphoprotein</keyword>
<keyword id="KW-1185">Reference proteome</keyword>
<comment type="function">
    <text evidence="1">Plus end-directed microtubule-dependent motor required for spindle assembly and chromosome movement during mitosis. Has microtubule depolymerization activity. Plays a role in chromosome congression.</text>
</comment>
<comment type="subcellular location">
    <subcellularLocation>
        <location evidence="1">Cytoplasm</location>
        <location evidence="1">Cytoskeleton</location>
        <location evidence="1">Microtubule organizing center</location>
        <location evidence="1">Centrosome</location>
    </subcellularLocation>
    <subcellularLocation>
        <location evidence="1">Cytoplasm</location>
        <location evidence="1">Cytoskeleton</location>
        <location evidence="1">Spindle</location>
    </subcellularLocation>
    <subcellularLocation>
        <location evidence="1">Chromosome</location>
        <location evidence="1">Centromere</location>
        <location evidence="1">Kinetochore</location>
    </subcellularLocation>
    <text evidence="1">Association with kinetochore is transient.</text>
</comment>
<comment type="PTM">
    <text evidence="1">Phosphorylation at Thr-125 by PLK1 is required for activity in the correction of kinetochore-microtubules attachment errors, while phosphorylation at Ser-204 also by PLK1 is required for the kinetochore localization and activity in prometaphase.</text>
</comment>
<comment type="similarity">
    <text evidence="3">Belongs to the TRAFAC class myosin-kinesin ATPase superfamily. Kinesin family. MCAK/KIF2 subfamily.</text>
</comment>